<name>RLMM_PSYIN</name>
<keyword id="KW-0963">Cytoplasm</keyword>
<keyword id="KW-0489">Methyltransferase</keyword>
<keyword id="KW-1185">Reference proteome</keyword>
<keyword id="KW-0698">rRNA processing</keyword>
<keyword id="KW-0949">S-adenosyl-L-methionine</keyword>
<keyword id="KW-0808">Transferase</keyword>
<proteinExistence type="inferred from homology"/>
<accession>A1SV95</accession>
<gene>
    <name evidence="1" type="primary">rlmM</name>
    <name type="ordered locus">Ping_1613</name>
</gene>
<protein>
    <recommendedName>
        <fullName evidence="1">Ribosomal RNA large subunit methyltransferase M</fullName>
        <ecNumber evidence="1">2.1.1.186</ecNumber>
    </recommendedName>
    <alternativeName>
        <fullName evidence="1">23S rRNA (cytidine2498-2'-O)-methyltransferase</fullName>
    </alternativeName>
    <alternativeName>
        <fullName evidence="1">23S rRNA 2'-O-ribose methyltransferase RlmM</fullName>
    </alternativeName>
</protein>
<comment type="function">
    <text evidence="1">Catalyzes the 2'-O-methylation at nucleotide C2498 in 23S rRNA.</text>
</comment>
<comment type="catalytic activity">
    <reaction evidence="1">
        <text>cytidine(2498) in 23S rRNA + S-adenosyl-L-methionine = 2'-O-methylcytidine(2498) in 23S rRNA + S-adenosyl-L-homocysteine + H(+)</text>
        <dbReference type="Rhea" id="RHEA:42788"/>
        <dbReference type="Rhea" id="RHEA-COMP:10244"/>
        <dbReference type="Rhea" id="RHEA-COMP:10245"/>
        <dbReference type="ChEBI" id="CHEBI:15378"/>
        <dbReference type="ChEBI" id="CHEBI:57856"/>
        <dbReference type="ChEBI" id="CHEBI:59789"/>
        <dbReference type="ChEBI" id="CHEBI:74495"/>
        <dbReference type="ChEBI" id="CHEBI:82748"/>
        <dbReference type="EC" id="2.1.1.186"/>
    </reaction>
</comment>
<comment type="subunit">
    <text evidence="1">Monomer.</text>
</comment>
<comment type="subcellular location">
    <subcellularLocation>
        <location evidence="1">Cytoplasm</location>
    </subcellularLocation>
</comment>
<comment type="similarity">
    <text evidence="1">Belongs to the class I-like SAM-binding methyltransferase superfamily. RNA methyltransferase RlmE family. RlmM subfamily.</text>
</comment>
<sequence>MLGILLYCRPGFENDCANELQDKATALEVFGFVKTKRNSGYVFYQCYDPQQVEYLLEKLDYKQLIFARQLIAVKAFINDLPLDDRISPILEITRNLPLGGDLYVETPEGDDTKPLLTFCRKFTVPLRQALRKHNSLTAKENRNKIFYHLCFLDNKSAYIGFSVPHNRSEFYMGIPRLRSPSEAPSRSTLKLDEAIQVFLTAEEQQERLHSGMRAVDLGACPGGWTYQLVRRGLFVTAIDNGAMAQSLMDTGQVTHYTVDGFKYEPERKNIDWLVCDMIEKPKRVAKLMGQWLIDGWCKEAIFNFKLPMKKRYQEASEDIKILTDMFEKEDLQYELQAKQLYHDREEITLHVRLIGNHWGKQLGNG</sequence>
<evidence type="ECO:0000255" key="1">
    <source>
        <dbReference type="HAMAP-Rule" id="MF_01551"/>
    </source>
</evidence>
<organism>
    <name type="scientific">Psychromonas ingrahamii (strain DSM 17664 / CCUG 51855 / 37)</name>
    <dbReference type="NCBI Taxonomy" id="357804"/>
    <lineage>
        <taxon>Bacteria</taxon>
        <taxon>Pseudomonadati</taxon>
        <taxon>Pseudomonadota</taxon>
        <taxon>Gammaproteobacteria</taxon>
        <taxon>Alteromonadales</taxon>
        <taxon>Psychromonadaceae</taxon>
        <taxon>Psychromonas</taxon>
    </lineage>
</organism>
<feature type="chain" id="PRO_0000314531" description="Ribosomal RNA large subunit methyltransferase M">
    <location>
        <begin position="1"/>
        <end position="365"/>
    </location>
</feature>
<feature type="active site" description="Proton acceptor" evidence="1">
    <location>
        <position position="305"/>
    </location>
</feature>
<feature type="binding site" evidence="1">
    <location>
        <position position="187"/>
    </location>
    <ligand>
        <name>S-adenosyl-L-methionine</name>
        <dbReference type="ChEBI" id="CHEBI:59789"/>
    </ligand>
</feature>
<feature type="binding site" evidence="1">
    <location>
        <begin position="220"/>
        <end position="223"/>
    </location>
    <ligand>
        <name>S-adenosyl-L-methionine</name>
        <dbReference type="ChEBI" id="CHEBI:59789"/>
    </ligand>
</feature>
<feature type="binding site" evidence="1">
    <location>
        <position position="239"/>
    </location>
    <ligand>
        <name>S-adenosyl-L-methionine</name>
        <dbReference type="ChEBI" id="CHEBI:59789"/>
    </ligand>
</feature>
<feature type="binding site" evidence="1">
    <location>
        <position position="259"/>
    </location>
    <ligand>
        <name>S-adenosyl-L-methionine</name>
        <dbReference type="ChEBI" id="CHEBI:59789"/>
    </ligand>
</feature>
<feature type="binding site" evidence="1">
    <location>
        <position position="276"/>
    </location>
    <ligand>
        <name>S-adenosyl-L-methionine</name>
        <dbReference type="ChEBI" id="CHEBI:59789"/>
    </ligand>
</feature>
<reference key="1">
    <citation type="journal article" date="2008" name="BMC Genomics">
        <title>Genomics of an extreme psychrophile, Psychromonas ingrahamii.</title>
        <authorList>
            <person name="Riley M."/>
            <person name="Staley J.T."/>
            <person name="Danchin A."/>
            <person name="Wang T.Z."/>
            <person name="Brettin T.S."/>
            <person name="Hauser L.J."/>
            <person name="Land M.L."/>
            <person name="Thompson L.S."/>
        </authorList>
    </citation>
    <scope>NUCLEOTIDE SEQUENCE [LARGE SCALE GENOMIC DNA]</scope>
    <source>
        <strain>DSM 17664 / CCUG 51855 / 37</strain>
    </source>
</reference>
<dbReference type="EC" id="2.1.1.186" evidence="1"/>
<dbReference type="EMBL" id="CP000510">
    <property type="protein sequence ID" value="ABM03410.1"/>
    <property type="molecule type" value="Genomic_DNA"/>
</dbReference>
<dbReference type="RefSeq" id="WP_011769970.1">
    <property type="nucleotide sequence ID" value="NC_008709.1"/>
</dbReference>
<dbReference type="SMR" id="A1SV95"/>
<dbReference type="STRING" id="357804.Ping_1613"/>
<dbReference type="KEGG" id="pin:Ping_1613"/>
<dbReference type="eggNOG" id="COG2933">
    <property type="taxonomic scope" value="Bacteria"/>
</dbReference>
<dbReference type="HOGENOM" id="CLU_043780_0_0_6"/>
<dbReference type="OrthoDB" id="154490at2"/>
<dbReference type="Proteomes" id="UP000000639">
    <property type="component" value="Chromosome"/>
</dbReference>
<dbReference type="GO" id="GO:0005737">
    <property type="term" value="C:cytoplasm"/>
    <property type="evidence" value="ECO:0007669"/>
    <property type="project" value="UniProtKB-SubCell"/>
</dbReference>
<dbReference type="GO" id="GO:0008757">
    <property type="term" value="F:S-adenosylmethionine-dependent methyltransferase activity"/>
    <property type="evidence" value="ECO:0007669"/>
    <property type="project" value="UniProtKB-UniRule"/>
</dbReference>
<dbReference type="GO" id="GO:0032259">
    <property type="term" value="P:methylation"/>
    <property type="evidence" value="ECO:0007669"/>
    <property type="project" value="UniProtKB-KW"/>
</dbReference>
<dbReference type="GO" id="GO:0006364">
    <property type="term" value="P:rRNA processing"/>
    <property type="evidence" value="ECO:0007669"/>
    <property type="project" value="UniProtKB-UniRule"/>
</dbReference>
<dbReference type="Gene3D" id="3.30.2300.20">
    <property type="match status" value="1"/>
</dbReference>
<dbReference type="Gene3D" id="3.30.70.2810">
    <property type="match status" value="1"/>
</dbReference>
<dbReference type="Gene3D" id="3.40.50.150">
    <property type="entry name" value="Vaccinia Virus protein VP39"/>
    <property type="match status" value="1"/>
</dbReference>
<dbReference type="HAMAP" id="MF_01551">
    <property type="entry name" value="23SrRNA_methyltr_M"/>
    <property type="match status" value="1"/>
</dbReference>
<dbReference type="InterPro" id="IPR040739">
    <property type="entry name" value="RlmM_FDX"/>
</dbReference>
<dbReference type="InterPro" id="IPR048646">
    <property type="entry name" value="RlmM_THUMP-like"/>
</dbReference>
<dbReference type="InterPro" id="IPR002877">
    <property type="entry name" value="RNA_MeTrfase_FtsJ_dom"/>
</dbReference>
<dbReference type="InterPro" id="IPR011224">
    <property type="entry name" value="rRNA_MeTrfase_M"/>
</dbReference>
<dbReference type="InterPro" id="IPR029063">
    <property type="entry name" value="SAM-dependent_MTases_sf"/>
</dbReference>
<dbReference type="NCBIfam" id="NF008734">
    <property type="entry name" value="PRK11760.1"/>
    <property type="match status" value="1"/>
</dbReference>
<dbReference type="PANTHER" id="PTHR37524">
    <property type="entry name" value="RIBOSOMAL RNA LARGE SUBUNIT METHYLTRANSFERASE M"/>
    <property type="match status" value="1"/>
</dbReference>
<dbReference type="PANTHER" id="PTHR37524:SF2">
    <property type="entry name" value="RIBOSOMAL RNA METHYLTRANSFERASE FTSJ DOMAIN-CONTAINING PROTEIN"/>
    <property type="match status" value="1"/>
</dbReference>
<dbReference type="Pfam" id="PF01728">
    <property type="entry name" value="FtsJ"/>
    <property type="match status" value="1"/>
</dbReference>
<dbReference type="Pfam" id="PF18125">
    <property type="entry name" value="RlmM_FDX"/>
    <property type="match status" value="1"/>
</dbReference>
<dbReference type="Pfam" id="PF21239">
    <property type="entry name" value="RLMM_N"/>
    <property type="match status" value="1"/>
</dbReference>
<dbReference type="PIRSF" id="PIRSF028774">
    <property type="entry name" value="UCP028774"/>
    <property type="match status" value="1"/>
</dbReference>
<dbReference type="SUPFAM" id="SSF53335">
    <property type="entry name" value="S-adenosyl-L-methionine-dependent methyltransferases"/>
    <property type="match status" value="1"/>
</dbReference>